<organism>
    <name type="scientific">Arthrobacter sp. (strain FB24)</name>
    <dbReference type="NCBI Taxonomy" id="290399"/>
    <lineage>
        <taxon>Bacteria</taxon>
        <taxon>Bacillati</taxon>
        <taxon>Actinomycetota</taxon>
        <taxon>Actinomycetes</taxon>
        <taxon>Micrococcales</taxon>
        <taxon>Micrococcaceae</taxon>
        <taxon>Arthrobacter</taxon>
    </lineage>
</organism>
<proteinExistence type="inferred from homology"/>
<evidence type="ECO:0000255" key="1">
    <source>
        <dbReference type="HAMAP-Rule" id="MF_01006"/>
    </source>
</evidence>
<dbReference type="EC" id="3.6.1.27" evidence="1"/>
<dbReference type="EMBL" id="CP000454">
    <property type="protein sequence ID" value="ABK03547.1"/>
    <property type="molecule type" value="Genomic_DNA"/>
</dbReference>
<dbReference type="SMR" id="A0JWX7"/>
<dbReference type="STRING" id="290399.Arth_2167"/>
<dbReference type="KEGG" id="art:Arth_2167"/>
<dbReference type="eggNOG" id="COG1968">
    <property type="taxonomic scope" value="Bacteria"/>
</dbReference>
<dbReference type="HOGENOM" id="CLU_060296_1_0_11"/>
<dbReference type="Proteomes" id="UP000000754">
    <property type="component" value="Chromosome"/>
</dbReference>
<dbReference type="GO" id="GO:0005886">
    <property type="term" value="C:plasma membrane"/>
    <property type="evidence" value="ECO:0007669"/>
    <property type="project" value="UniProtKB-SubCell"/>
</dbReference>
<dbReference type="GO" id="GO:0050380">
    <property type="term" value="F:undecaprenyl-diphosphatase activity"/>
    <property type="evidence" value="ECO:0007669"/>
    <property type="project" value="UniProtKB-UniRule"/>
</dbReference>
<dbReference type="GO" id="GO:0071555">
    <property type="term" value="P:cell wall organization"/>
    <property type="evidence" value="ECO:0007669"/>
    <property type="project" value="UniProtKB-KW"/>
</dbReference>
<dbReference type="GO" id="GO:0009252">
    <property type="term" value="P:peptidoglycan biosynthetic process"/>
    <property type="evidence" value="ECO:0007669"/>
    <property type="project" value="UniProtKB-KW"/>
</dbReference>
<dbReference type="GO" id="GO:0008360">
    <property type="term" value="P:regulation of cell shape"/>
    <property type="evidence" value="ECO:0007669"/>
    <property type="project" value="UniProtKB-KW"/>
</dbReference>
<dbReference type="GO" id="GO:0046677">
    <property type="term" value="P:response to antibiotic"/>
    <property type="evidence" value="ECO:0007669"/>
    <property type="project" value="UniProtKB-UniRule"/>
</dbReference>
<dbReference type="HAMAP" id="MF_01006">
    <property type="entry name" value="Undec_diphosphatase"/>
    <property type="match status" value="1"/>
</dbReference>
<dbReference type="InterPro" id="IPR003824">
    <property type="entry name" value="UppP"/>
</dbReference>
<dbReference type="NCBIfam" id="NF001392">
    <property type="entry name" value="PRK00281.2-1"/>
    <property type="match status" value="1"/>
</dbReference>
<dbReference type="NCBIfam" id="TIGR00753">
    <property type="entry name" value="undec_PP_bacA"/>
    <property type="match status" value="1"/>
</dbReference>
<dbReference type="PANTHER" id="PTHR30622">
    <property type="entry name" value="UNDECAPRENYL-DIPHOSPHATASE"/>
    <property type="match status" value="1"/>
</dbReference>
<dbReference type="PANTHER" id="PTHR30622:SF4">
    <property type="entry name" value="UNDECAPRENYL-DIPHOSPHATASE"/>
    <property type="match status" value="1"/>
</dbReference>
<dbReference type="Pfam" id="PF02673">
    <property type="entry name" value="BacA"/>
    <property type="match status" value="1"/>
</dbReference>
<name>UPPP_ARTS2</name>
<feature type="chain" id="PRO_0000290682" description="Undecaprenyl-diphosphatase">
    <location>
        <begin position="1"/>
        <end position="286"/>
    </location>
</feature>
<feature type="transmembrane region" description="Helical" evidence="1">
    <location>
        <begin position="50"/>
        <end position="70"/>
    </location>
</feature>
<feature type="transmembrane region" description="Helical" evidence="1">
    <location>
        <begin position="97"/>
        <end position="117"/>
    </location>
</feature>
<feature type="transmembrane region" description="Helical" evidence="1">
    <location>
        <begin position="126"/>
        <end position="146"/>
    </location>
</feature>
<feature type="transmembrane region" description="Helical" evidence="1">
    <location>
        <begin position="156"/>
        <end position="176"/>
    </location>
</feature>
<feature type="transmembrane region" description="Helical" evidence="1">
    <location>
        <begin position="200"/>
        <end position="220"/>
    </location>
</feature>
<feature type="transmembrane region" description="Helical" evidence="1">
    <location>
        <begin position="236"/>
        <end position="256"/>
    </location>
</feature>
<feature type="transmembrane region" description="Helical" evidence="1">
    <location>
        <begin position="264"/>
        <end position="284"/>
    </location>
</feature>
<comment type="function">
    <text evidence="1">Catalyzes the dephosphorylation of undecaprenyl diphosphate (UPP). Confers resistance to bacitracin.</text>
</comment>
<comment type="catalytic activity">
    <reaction evidence="1">
        <text>di-trans,octa-cis-undecaprenyl diphosphate + H2O = di-trans,octa-cis-undecaprenyl phosphate + phosphate + H(+)</text>
        <dbReference type="Rhea" id="RHEA:28094"/>
        <dbReference type="ChEBI" id="CHEBI:15377"/>
        <dbReference type="ChEBI" id="CHEBI:15378"/>
        <dbReference type="ChEBI" id="CHEBI:43474"/>
        <dbReference type="ChEBI" id="CHEBI:58405"/>
        <dbReference type="ChEBI" id="CHEBI:60392"/>
        <dbReference type="EC" id="3.6.1.27"/>
    </reaction>
</comment>
<comment type="subcellular location">
    <subcellularLocation>
        <location evidence="1">Cell membrane</location>
        <topology evidence="1">Multi-pass membrane protein</topology>
    </subcellularLocation>
</comment>
<comment type="miscellaneous">
    <text>Bacitracin is thought to be involved in the inhibition of peptidoglycan synthesis by sequestering undecaprenyl diphosphate, thereby reducing the pool of lipid carrier available.</text>
</comment>
<comment type="similarity">
    <text evidence="1">Belongs to the UppP family.</text>
</comment>
<accession>A0JWX7</accession>
<keyword id="KW-0046">Antibiotic resistance</keyword>
<keyword id="KW-1003">Cell membrane</keyword>
<keyword id="KW-0133">Cell shape</keyword>
<keyword id="KW-0961">Cell wall biogenesis/degradation</keyword>
<keyword id="KW-0378">Hydrolase</keyword>
<keyword id="KW-0472">Membrane</keyword>
<keyword id="KW-0573">Peptidoglycan synthesis</keyword>
<keyword id="KW-1185">Reference proteome</keyword>
<keyword id="KW-0812">Transmembrane</keyword>
<keyword id="KW-1133">Transmembrane helix</keyword>
<sequence length="286" mass="31290">MLHDVGSINVNWFEAALLGLVQGLTEFLPISSSAHLRIVGSFLPNAADPGAAFTAITQLGTETAVIVYFWRDIVRIVKAWAGTLTRRVPTDDPDARMGWLVILGSLPIIVLGLIFQDQIESVLRSLWIVATMLIVFGLILAVADAVGRQERELTRLTYKHGIFYGFAQAMALIPGVSRSGGTITAGLLMGYTREAAARYSFLLAIPAVFGSGLYQLYKVMSKDGITGPYGLPETALATLIAFVVGYVIIGWFLKFVSTRSYRLFVWYRIFLGLALYLLLGFNVISA</sequence>
<protein>
    <recommendedName>
        <fullName evidence="1">Undecaprenyl-diphosphatase</fullName>
        <ecNumber evidence="1">3.6.1.27</ecNumber>
    </recommendedName>
    <alternativeName>
        <fullName evidence="1">Bacitracin resistance protein</fullName>
    </alternativeName>
    <alternativeName>
        <fullName evidence="1">Undecaprenyl pyrophosphate phosphatase</fullName>
    </alternativeName>
</protein>
<gene>
    <name evidence="1" type="primary">uppP</name>
    <name type="ordered locus">Arth_2167</name>
</gene>
<reference key="1">
    <citation type="journal article" date="2013" name="Stand. Genomic Sci.">
        <title>Complete genome sequence of Arthrobacter sp. strain FB24.</title>
        <authorList>
            <person name="Nakatsu C.H."/>
            <person name="Barabote R."/>
            <person name="Thompson S."/>
            <person name="Bruce D."/>
            <person name="Detter C."/>
            <person name="Brettin T."/>
            <person name="Han C."/>
            <person name="Beasley F."/>
            <person name="Chen W."/>
            <person name="Konopka A."/>
            <person name="Xie G."/>
        </authorList>
    </citation>
    <scope>NUCLEOTIDE SEQUENCE [LARGE SCALE GENOMIC DNA]</scope>
    <source>
        <strain>FB24</strain>
    </source>
</reference>